<proteinExistence type="evidence at protein level"/>
<organism>
    <name type="scientific">Methanocaldococcus jannaschii (strain ATCC 43067 / DSM 2661 / JAL-1 / JCM 10045 / NBRC 100440)</name>
    <name type="common">Methanococcus jannaschii</name>
    <dbReference type="NCBI Taxonomy" id="243232"/>
    <lineage>
        <taxon>Archaea</taxon>
        <taxon>Methanobacteriati</taxon>
        <taxon>Methanobacteriota</taxon>
        <taxon>Methanomada group</taxon>
        <taxon>Methanococci</taxon>
        <taxon>Methanococcales</taxon>
        <taxon>Methanocaldococcaceae</taxon>
        <taxon>Methanocaldococcus</taxon>
    </lineage>
</organism>
<sequence>MDERFEIKDIVAREVIDSRGNPTVEVEVITKGNGYGSAIVPSGASTGTHEALELRDKEKRFGGKGVLMAVENVNSIIRPEILGYDARMQREIDTIMIELDGTPNKSRLGANAILAVSLAVAKAAAATAKIPLYKYLGGFNSYVMPVPMMNVINGGKHAGNDLDLQEFMIMPVGATSISEAVRMGSEVYHVLKNVILEKYGKNAVNVGDEGGFAPPLKTSREALDLLTESVKKAGYEDEVVFALDAAASEFYKDGYYYVEGKKLTREELLDYYKALVDEYPIVSIEDPFHEEDFEGFAMITKELDIQIVGDDLFVTNVERLRKGIEMKAANALLLKVNQIGTLSEAVDAAQLAFRNGYGVVVSHRSGETEDTTIADLSVALNSGQIKTGAPARGERTAKYNQLIRIEQELGLSKYAGRNFRCPF</sequence>
<name>ENO_METJA</name>
<dbReference type="EC" id="4.2.1.11" evidence="1"/>
<dbReference type="EMBL" id="L77117">
    <property type="protein sequence ID" value="AAB98220.1"/>
    <property type="status" value="ALT_INIT"/>
    <property type="molecule type" value="Genomic_DNA"/>
</dbReference>
<dbReference type="PIR" id="A64329">
    <property type="entry name" value="A64329"/>
</dbReference>
<dbReference type="RefSeq" id="WP_064496902.1">
    <property type="nucleotide sequence ID" value="NC_000909.1"/>
</dbReference>
<dbReference type="PDB" id="2PA6">
    <property type="method" value="X-ray"/>
    <property type="resolution" value="1.85 A"/>
    <property type="chains" value="A/B=1-423"/>
</dbReference>
<dbReference type="PDBsum" id="2PA6"/>
<dbReference type="SMR" id="Q60173"/>
<dbReference type="FunCoup" id="Q60173">
    <property type="interactions" value="231"/>
</dbReference>
<dbReference type="STRING" id="243232.MJ_0232"/>
<dbReference type="PaxDb" id="243232-MJ_0232"/>
<dbReference type="EnsemblBacteria" id="AAB98220">
    <property type="protein sequence ID" value="AAB98220"/>
    <property type="gene ID" value="MJ_0232"/>
</dbReference>
<dbReference type="GeneID" id="1451085"/>
<dbReference type="KEGG" id="mja:MJ_0232"/>
<dbReference type="eggNOG" id="arCOG01169">
    <property type="taxonomic scope" value="Archaea"/>
</dbReference>
<dbReference type="HOGENOM" id="CLU_031223_2_1_2"/>
<dbReference type="InParanoid" id="Q60173"/>
<dbReference type="OrthoDB" id="8680at2157"/>
<dbReference type="PhylomeDB" id="Q60173"/>
<dbReference type="UniPathway" id="UPA00109">
    <property type="reaction ID" value="UER00187"/>
</dbReference>
<dbReference type="EvolutionaryTrace" id="Q60173"/>
<dbReference type="Proteomes" id="UP000000805">
    <property type="component" value="Chromosome"/>
</dbReference>
<dbReference type="GO" id="GO:0009986">
    <property type="term" value="C:cell surface"/>
    <property type="evidence" value="ECO:0007669"/>
    <property type="project" value="UniProtKB-SubCell"/>
</dbReference>
<dbReference type="GO" id="GO:0005576">
    <property type="term" value="C:extracellular region"/>
    <property type="evidence" value="ECO:0007669"/>
    <property type="project" value="UniProtKB-SubCell"/>
</dbReference>
<dbReference type="GO" id="GO:0000015">
    <property type="term" value="C:phosphopyruvate hydratase complex"/>
    <property type="evidence" value="ECO:0000318"/>
    <property type="project" value="GO_Central"/>
</dbReference>
<dbReference type="GO" id="GO:0000287">
    <property type="term" value="F:magnesium ion binding"/>
    <property type="evidence" value="ECO:0007669"/>
    <property type="project" value="UniProtKB-UniRule"/>
</dbReference>
<dbReference type="GO" id="GO:0004634">
    <property type="term" value="F:phosphopyruvate hydratase activity"/>
    <property type="evidence" value="ECO:0000318"/>
    <property type="project" value="GO_Central"/>
</dbReference>
<dbReference type="GO" id="GO:0006096">
    <property type="term" value="P:glycolytic process"/>
    <property type="evidence" value="ECO:0000318"/>
    <property type="project" value="GO_Central"/>
</dbReference>
<dbReference type="CDD" id="cd03313">
    <property type="entry name" value="enolase"/>
    <property type="match status" value="1"/>
</dbReference>
<dbReference type="FunFam" id="3.30.390.10:FF:000001">
    <property type="entry name" value="Enolase"/>
    <property type="match status" value="1"/>
</dbReference>
<dbReference type="Gene3D" id="3.20.20.120">
    <property type="entry name" value="Enolase-like C-terminal domain"/>
    <property type="match status" value="1"/>
</dbReference>
<dbReference type="Gene3D" id="3.30.390.10">
    <property type="entry name" value="Enolase-like, N-terminal domain"/>
    <property type="match status" value="1"/>
</dbReference>
<dbReference type="HAMAP" id="MF_00318">
    <property type="entry name" value="Enolase"/>
    <property type="match status" value="1"/>
</dbReference>
<dbReference type="InterPro" id="IPR000941">
    <property type="entry name" value="Enolase"/>
</dbReference>
<dbReference type="InterPro" id="IPR036849">
    <property type="entry name" value="Enolase-like_C_sf"/>
</dbReference>
<dbReference type="InterPro" id="IPR029017">
    <property type="entry name" value="Enolase-like_N"/>
</dbReference>
<dbReference type="InterPro" id="IPR020810">
    <property type="entry name" value="Enolase_C"/>
</dbReference>
<dbReference type="InterPro" id="IPR020809">
    <property type="entry name" value="Enolase_CS"/>
</dbReference>
<dbReference type="InterPro" id="IPR020811">
    <property type="entry name" value="Enolase_N"/>
</dbReference>
<dbReference type="NCBIfam" id="TIGR01060">
    <property type="entry name" value="eno"/>
    <property type="match status" value="1"/>
</dbReference>
<dbReference type="PANTHER" id="PTHR11902">
    <property type="entry name" value="ENOLASE"/>
    <property type="match status" value="1"/>
</dbReference>
<dbReference type="PANTHER" id="PTHR11902:SF1">
    <property type="entry name" value="ENOLASE"/>
    <property type="match status" value="1"/>
</dbReference>
<dbReference type="Pfam" id="PF00113">
    <property type="entry name" value="Enolase_C"/>
    <property type="match status" value="1"/>
</dbReference>
<dbReference type="Pfam" id="PF03952">
    <property type="entry name" value="Enolase_N"/>
    <property type="match status" value="1"/>
</dbReference>
<dbReference type="PIRSF" id="PIRSF001400">
    <property type="entry name" value="Enolase"/>
    <property type="match status" value="1"/>
</dbReference>
<dbReference type="PRINTS" id="PR00148">
    <property type="entry name" value="ENOLASE"/>
</dbReference>
<dbReference type="SFLD" id="SFLDS00001">
    <property type="entry name" value="Enolase"/>
    <property type="match status" value="1"/>
</dbReference>
<dbReference type="SFLD" id="SFLDF00002">
    <property type="entry name" value="enolase"/>
    <property type="match status" value="1"/>
</dbReference>
<dbReference type="SMART" id="SM01192">
    <property type="entry name" value="Enolase_C"/>
    <property type="match status" value="1"/>
</dbReference>
<dbReference type="SMART" id="SM01193">
    <property type="entry name" value="Enolase_N"/>
    <property type="match status" value="1"/>
</dbReference>
<dbReference type="SUPFAM" id="SSF51604">
    <property type="entry name" value="Enolase C-terminal domain-like"/>
    <property type="match status" value="1"/>
</dbReference>
<dbReference type="SUPFAM" id="SSF54826">
    <property type="entry name" value="Enolase N-terminal domain-like"/>
    <property type="match status" value="1"/>
</dbReference>
<dbReference type="PROSITE" id="PS00164">
    <property type="entry name" value="ENOLASE"/>
    <property type="match status" value="1"/>
</dbReference>
<reference key="1">
    <citation type="journal article" date="1996" name="Science">
        <title>Complete genome sequence of the methanogenic archaeon, Methanococcus jannaschii.</title>
        <authorList>
            <person name="Bult C.J."/>
            <person name="White O."/>
            <person name="Olsen G.J."/>
            <person name="Zhou L."/>
            <person name="Fleischmann R.D."/>
            <person name="Sutton G.G."/>
            <person name="Blake J.A."/>
            <person name="FitzGerald L.M."/>
            <person name="Clayton R.A."/>
            <person name="Gocayne J.D."/>
            <person name="Kerlavage A.R."/>
            <person name="Dougherty B.A."/>
            <person name="Tomb J.-F."/>
            <person name="Adams M.D."/>
            <person name="Reich C.I."/>
            <person name="Overbeek R."/>
            <person name="Kirkness E.F."/>
            <person name="Weinstock K.G."/>
            <person name="Merrick J.M."/>
            <person name="Glodek A."/>
            <person name="Scott J.L."/>
            <person name="Geoghagen N.S.M."/>
            <person name="Weidman J.F."/>
            <person name="Fuhrmann J.L."/>
            <person name="Nguyen D."/>
            <person name="Utterback T.R."/>
            <person name="Kelley J.M."/>
            <person name="Peterson J.D."/>
            <person name="Sadow P.W."/>
            <person name="Hanna M.C."/>
            <person name="Cotton M.D."/>
            <person name="Roberts K.M."/>
            <person name="Hurst M.A."/>
            <person name="Kaine B.P."/>
            <person name="Borodovsky M."/>
            <person name="Klenk H.-P."/>
            <person name="Fraser C.M."/>
            <person name="Smith H.O."/>
            <person name="Woese C.R."/>
            <person name="Venter J.C."/>
        </authorList>
    </citation>
    <scope>NUCLEOTIDE SEQUENCE [LARGE SCALE GENOMIC DNA]</scope>
    <source>
        <strain>ATCC 43067 / DSM 2661 / JAL-1 / JCM 10045 / NBRC 100440</strain>
    </source>
</reference>
<reference evidence="4" key="2">
    <citation type="journal article" date="2008" name="Acta Crystallogr. F">
        <title>Purification, crystallization and preliminary crystallographic study of the putative enolase MJ0232 from the hyperthermophilic archaeon Methanococcus jannaschii.</title>
        <authorList>
            <person name="Yamamoto H."/>
            <person name="Kunishima N."/>
        </authorList>
    </citation>
    <scope>X-RAY CRYSTALLOGRAPHY (1.85 ANGSTROMS)</scope>
    <scope>SUBUNIT</scope>
    <source>
        <strain>ATCC 43067 / DSM 2661 / JAL-1 / JCM 10045 / NBRC 100440</strain>
    </source>
</reference>
<protein>
    <recommendedName>
        <fullName evidence="1">Enolase</fullName>
        <ecNumber evidence="1">4.2.1.11</ecNumber>
    </recommendedName>
    <alternativeName>
        <fullName evidence="1">2-phospho-D-glycerate hydro-lyase</fullName>
    </alternativeName>
    <alternativeName>
        <fullName evidence="1">2-phosphoglycerate dehydratase</fullName>
    </alternativeName>
</protein>
<evidence type="ECO:0000255" key="1">
    <source>
        <dbReference type="HAMAP-Rule" id="MF_00318"/>
    </source>
</evidence>
<evidence type="ECO:0000305" key="2"/>
<evidence type="ECO:0000305" key="3">
    <source>
    </source>
</evidence>
<evidence type="ECO:0007744" key="4">
    <source>
        <dbReference type="PDB" id="2PA6"/>
    </source>
</evidence>
<evidence type="ECO:0007829" key="5">
    <source>
        <dbReference type="PDB" id="2PA6"/>
    </source>
</evidence>
<accession>Q60173</accession>
<gene>
    <name evidence="1" type="primary">eno</name>
    <name type="ordered locus">MJ0232</name>
</gene>
<keyword id="KW-0002">3D-structure</keyword>
<keyword id="KW-0963">Cytoplasm</keyword>
<keyword id="KW-0324">Glycolysis</keyword>
<keyword id="KW-0456">Lyase</keyword>
<keyword id="KW-0460">Magnesium</keyword>
<keyword id="KW-0479">Metal-binding</keyword>
<keyword id="KW-1185">Reference proteome</keyword>
<keyword id="KW-0964">Secreted</keyword>
<feature type="chain" id="PRO_0000134024" description="Enolase">
    <location>
        <begin position="1"/>
        <end position="423"/>
    </location>
</feature>
<feature type="active site" description="Proton donor" evidence="1">
    <location>
        <position position="209"/>
    </location>
</feature>
<feature type="active site" description="Proton acceptor" evidence="1">
    <location>
        <position position="335"/>
    </location>
</feature>
<feature type="binding site" evidence="1">
    <location>
        <position position="165"/>
    </location>
    <ligand>
        <name>(2R)-2-phosphoglycerate</name>
        <dbReference type="ChEBI" id="CHEBI:58289"/>
    </ligand>
</feature>
<feature type="binding site" evidence="1">
    <location>
        <position position="244"/>
    </location>
    <ligand>
        <name>Mg(2+)</name>
        <dbReference type="ChEBI" id="CHEBI:18420"/>
    </ligand>
</feature>
<feature type="binding site" evidence="1">
    <location>
        <position position="285"/>
    </location>
    <ligand>
        <name>Mg(2+)</name>
        <dbReference type="ChEBI" id="CHEBI:18420"/>
    </ligand>
</feature>
<feature type="binding site" evidence="1">
    <location>
        <position position="310"/>
    </location>
    <ligand>
        <name>Mg(2+)</name>
        <dbReference type="ChEBI" id="CHEBI:18420"/>
    </ligand>
</feature>
<feature type="binding site" evidence="1">
    <location>
        <position position="335"/>
    </location>
    <ligand>
        <name>(2R)-2-phosphoglycerate</name>
        <dbReference type="ChEBI" id="CHEBI:58289"/>
    </ligand>
</feature>
<feature type="binding site" evidence="1">
    <location>
        <position position="364"/>
    </location>
    <ligand>
        <name>(2R)-2-phosphoglycerate</name>
        <dbReference type="ChEBI" id="CHEBI:58289"/>
    </ligand>
</feature>
<feature type="binding site" evidence="1">
    <location>
        <position position="365"/>
    </location>
    <ligand>
        <name>(2R)-2-phosphoglycerate</name>
        <dbReference type="ChEBI" id="CHEBI:58289"/>
    </ligand>
</feature>
<feature type="binding site" evidence="1">
    <location>
        <position position="386"/>
    </location>
    <ligand>
        <name>(2R)-2-phosphoglycerate</name>
        <dbReference type="ChEBI" id="CHEBI:58289"/>
    </ligand>
</feature>
<feature type="helix" evidence="5">
    <location>
        <begin position="3"/>
        <end position="5"/>
    </location>
</feature>
<feature type="strand" evidence="5">
    <location>
        <begin position="6"/>
        <end position="16"/>
    </location>
</feature>
<feature type="strand" evidence="5">
    <location>
        <begin position="22"/>
        <end position="30"/>
    </location>
</feature>
<feature type="strand" evidence="5">
    <location>
        <begin position="35"/>
        <end position="39"/>
    </location>
</feature>
<feature type="strand" evidence="5">
    <location>
        <begin position="48"/>
        <end position="50"/>
    </location>
</feature>
<feature type="helix" evidence="5">
    <location>
        <begin position="60"/>
        <end position="63"/>
    </location>
</feature>
<feature type="helix" evidence="5">
    <location>
        <begin position="67"/>
        <end position="75"/>
    </location>
</feature>
<feature type="helix" evidence="5">
    <location>
        <begin position="77"/>
        <end position="81"/>
    </location>
</feature>
<feature type="helix" evidence="5">
    <location>
        <begin position="89"/>
        <end position="100"/>
    </location>
</feature>
<feature type="turn" evidence="5">
    <location>
        <begin position="106"/>
        <end position="108"/>
    </location>
</feature>
<feature type="helix" evidence="5">
    <location>
        <begin position="110"/>
        <end position="128"/>
    </location>
</feature>
<feature type="helix" evidence="5">
    <location>
        <begin position="132"/>
        <end position="137"/>
    </location>
</feature>
<feature type="strand" evidence="5">
    <location>
        <begin position="149"/>
        <end position="153"/>
    </location>
</feature>
<feature type="turn" evidence="5">
    <location>
        <begin position="156"/>
        <end position="158"/>
    </location>
</feature>
<feature type="strand" evidence="5">
    <location>
        <begin position="159"/>
        <end position="161"/>
    </location>
</feature>
<feature type="strand" evidence="5">
    <location>
        <begin position="163"/>
        <end position="170"/>
    </location>
</feature>
<feature type="helix" evidence="5">
    <location>
        <begin position="177"/>
        <end position="199"/>
    </location>
</feature>
<feature type="helix" evidence="5">
    <location>
        <begin position="219"/>
        <end position="233"/>
    </location>
</feature>
<feature type="turn" evidence="5">
    <location>
        <begin position="236"/>
        <end position="238"/>
    </location>
</feature>
<feature type="strand" evidence="5">
    <location>
        <begin position="240"/>
        <end position="244"/>
    </location>
</feature>
<feature type="helix" evidence="5">
    <location>
        <begin position="247"/>
        <end position="250"/>
    </location>
</feature>
<feature type="strand" evidence="5">
    <location>
        <begin position="255"/>
        <end position="258"/>
    </location>
</feature>
<feature type="strand" evidence="5">
    <location>
        <begin position="261"/>
        <end position="263"/>
    </location>
</feature>
<feature type="helix" evidence="5">
    <location>
        <begin position="265"/>
        <end position="278"/>
    </location>
</feature>
<feature type="strand" evidence="5">
    <location>
        <begin position="281"/>
        <end position="285"/>
    </location>
</feature>
<feature type="helix" evidence="5">
    <location>
        <begin position="293"/>
        <end position="302"/>
    </location>
</feature>
<feature type="strand" evidence="5">
    <location>
        <begin position="303"/>
        <end position="310"/>
    </location>
</feature>
<feature type="turn" evidence="5">
    <location>
        <begin position="311"/>
        <end position="315"/>
    </location>
</feature>
<feature type="helix" evidence="5">
    <location>
        <begin position="317"/>
        <end position="326"/>
    </location>
</feature>
<feature type="strand" evidence="5">
    <location>
        <begin position="330"/>
        <end position="334"/>
    </location>
</feature>
<feature type="helix" evidence="5">
    <location>
        <begin position="336"/>
        <end position="339"/>
    </location>
</feature>
<feature type="helix" evidence="5">
    <location>
        <begin position="342"/>
        <end position="353"/>
    </location>
</feature>
<feature type="turn" evidence="5">
    <location>
        <begin position="354"/>
        <end position="356"/>
    </location>
</feature>
<feature type="strand" evidence="5">
    <location>
        <begin position="358"/>
        <end position="362"/>
    </location>
</feature>
<feature type="helix" evidence="5">
    <location>
        <begin position="372"/>
        <end position="379"/>
    </location>
</feature>
<feature type="strand" evidence="5">
    <location>
        <begin position="383"/>
        <end position="386"/>
    </location>
</feature>
<feature type="helix" evidence="5">
    <location>
        <begin position="393"/>
        <end position="408"/>
    </location>
</feature>
<feature type="strand" evidence="5">
    <location>
        <begin position="409"/>
        <end position="411"/>
    </location>
</feature>
<feature type="helix" evidence="5">
    <location>
        <begin position="416"/>
        <end position="418"/>
    </location>
</feature>
<comment type="function">
    <text evidence="1">Catalyzes the reversible conversion of 2-phosphoglycerate (2-PG) into phosphoenolpyruvate (PEP). It is essential for the degradation of carbohydrates via glycolysis.</text>
</comment>
<comment type="catalytic activity">
    <reaction evidence="1">
        <text>(2R)-2-phosphoglycerate = phosphoenolpyruvate + H2O</text>
        <dbReference type="Rhea" id="RHEA:10164"/>
        <dbReference type="ChEBI" id="CHEBI:15377"/>
        <dbReference type="ChEBI" id="CHEBI:58289"/>
        <dbReference type="ChEBI" id="CHEBI:58702"/>
        <dbReference type="EC" id="4.2.1.11"/>
    </reaction>
</comment>
<comment type="cofactor">
    <cofactor evidence="1">
        <name>Mg(2+)</name>
        <dbReference type="ChEBI" id="CHEBI:18420"/>
    </cofactor>
    <text evidence="1">Binds a second Mg(2+) ion via substrate during catalysis.</text>
</comment>
<comment type="activity regulation">
    <text evidence="1">The covalent binding to the substrate causes inactivation of the enzyme, and possibly serves as a signal for the export of the protein.</text>
</comment>
<comment type="pathway">
    <text evidence="1">Carbohydrate degradation; glycolysis; pyruvate from D-glyceraldehyde 3-phosphate: step 4/5.</text>
</comment>
<comment type="subunit">
    <text evidence="3">Homooctamer formed by a tetramer of dimers (PubMed:18997349).</text>
</comment>
<comment type="subcellular location">
    <subcellularLocation>
        <location evidence="1">Cytoplasm</location>
    </subcellularLocation>
    <subcellularLocation>
        <location evidence="1">Secreted</location>
    </subcellularLocation>
    <subcellularLocation>
        <location evidence="1">Cell surface</location>
    </subcellularLocation>
    <text evidence="1">Fractions of enolase are present in both the cytoplasm and on the cell surface.</text>
</comment>
<comment type="similarity">
    <text evidence="1">Belongs to the enolase family.</text>
</comment>
<comment type="sequence caution" evidence="2">
    <conflict type="erroneous initiation">
        <sequence resource="EMBL-CDS" id="AAB98220"/>
    </conflict>
    <text>Extended N-terminus.</text>
</comment>